<gene>
    <name evidence="2" type="primary">TMEM225B</name>
</gene>
<reference key="1">
    <citation type="journal article" date="2003" name="Nature">
        <title>The DNA sequence of human chromosome 7.</title>
        <authorList>
            <person name="Hillier L.W."/>
            <person name="Fulton R.S."/>
            <person name="Fulton L.A."/>
            <person name="Graves T.A."/>
            <person name="Pepin K.H."/>
            <person name="Wagner-McPherson C."/>
            <person name="Layman D."/>
            <person name="Maas J."/>
            <person name="Jaeger S."/>
            <person name="Walker R."/>
            <person name="Wylie K."/>
            <person name="Sekhon M."/>
            <person name="Becker M.C."/>
            <person name="O'Laughlin M.D."/>
            <person name="Schaller M.E."/>
            <person name="Fewell G.A."/>
            <person name="Delehaunty K.D."/>
            <person name="Miner T.L."/>
            <person name="Nash W.E."/>
            <person name="Cordes M."/>
            <person name="Du H."/>
            <person name="Sun H."/>
            <person name="Edwards J."/>
            <person name="Bradshaw-Cordum H."/>
            <person name="Ali J."/>
            <person name="Andrews S."/>
            <person name="Isak A."/>
            <person name="Vanbrunt A."/>
            <person name="Nguyen C."/>
            <person name="Du F."/>
            <person name="Lamar B."/>
            <person name="Courtney L."/>
            <person name="Kalicki J."/>
            <person name="Ozersky P."/>
            <person name="Bielicki L."/>
            <person name="Scott K."/>
            <person name="Holmes A."/>
            <person name="Harkins R."/>
            <person name="Harris A."/>
            <person name="Strong C.M."/>
            <person name="Hou S."/>
            <person name="Tomlinson C."/>
            <person name="Dauphin-Kohlberg S."/>
            <person name="Kozlowicz-Reilly A."/>
            <person name="Leonard S."/>
            <person name="Rohlfing T."/>
            <person name="Rock S.M."/>
            <person name="Tin-Wollam A.-M."/>
            <person name="Abbott A."/>
            <person name="Minx P."/>
            <person name="Maupin R."/>
            <person name="Strowmatt C."/>
            <person name="Latreille P."/>
            <person name="Miller N."/>
            <person name="Johnson D."/>
            <person name="Murray J."/>
            <person name="Woessner J.P."/>
            <person name="Wendl M.C."/>
            <person name="Yang S.-P."/>
            <person name="Schultz B.R."/>
            <person name="Wallis J.W."/>
            <person name="Spieth J."/>
            <person name="Bieri T.A."/>
            <person name="Nelson J.O."/>
            <person name="Berkowicz N."/>
            <person name="Wohldmann P.E."/>
            <person name="Cook L.L."/>
            <person name="Hickenbotham M.T."/>
            <person name="Eldred J."/>
            <person name="Williams D."/>
            <person name="Bedell J.A."/>
            <person name="Mardis E.R."/>
            <person name="Clifton S.W."/>
            <person name="Chissoe S.L."/>
            <person name="Marra M.A."/>
            <person name="Raymond C."/>
            <person name="Haugen E."/>
            <person name="Gillett W."/>
            <person name="Zhou Y."/>
            <person name="James R."/>
            <person name="Phelps K."/>
            <person name="Iadanoto S."/>
            <person name="Bubb K."/>
            <person name="Simms E."/>
            <person name="Levy R."/>
            <person name="Clendenning J."/>
            <person name="Kaul R."/>
            <person name="Kent W.J."/>
            <person name="Furey T.S."/>
            <person name="Baertsch R.A."/>
            <person name="Brent M.R."/>
            <person name="Keibler E."/>
            <person name="Flicek P."/>
            <person name="Bork P."/>
            <person name="Suyama M."/>
            <person name="Bailey J.A."/>
            <person name="Portnoy M.E."/>
            <person name="Torrents D."/>
            <person name="Chinwalla A.T."/>
            <person name="Gish W.R."/>
            <person name="Eddy S.R."/>
            <person name="McPherson J.D."/>
            <person name="Olson M.V."/>
            <person name="Eichler E.E."/>
            <person name="Green E.D."/>
            <person name="Waterston R.H."/>
            <person name="Wilson R.K."/>
        </authorList>
    </citation>
    <scope>NUCLEOTIDE SEQUENCE [LARGE SCALE GENOMIC DNA]</scope>
</reference>
<reference key="2">
    <citation type="journal article" date="2004" name="Genome Res.">
        <title>The status, quality, and expansion of the NIH full-length cDNA project: the Mammalian Gene Collection (MGC).</title>
        <authorList>
            <consortium name="The MGC Project Team"/>
        </authorList>
    </citation>
    <scope>NUCLEOTIDE SEQUENCE [LARGE SCALE MRNA] OF 1-166</scope>
</reference>
<sequence>MLTLEDKDMKGFSWAIVPALTSLGYLIILVVSIFPFWVRLTNEESHEVFFSGLFENCFNAKCWKPRPLSIYIILGRVFLLSAVFLAFVTTFIMMPFASEFFPRTWKQNFVLACISFFTGACAFLALVLHALEIKALRMKLGPLQFSVLWPYYVLGFGIFLFIVAGTICLIQEMVCPCWHLLSTSQSMEEDHGSLYLDNLESLGGEPSSVQKETQVTAETVI</sequence>
<proteinExistence type="evidence at protein level"/>
<evidence type="ECO:0000255" key="1"/>
<evidence type="ECO:0000312" key="2">
    <source>
        <dbReference type="HGNC" id="HGNC:53075"/>
    </source>
</evidence>
<accession>P0DP42</accession>
<organism>
    <name type="scientific">Homo sapiens</name>
    <name type="common">Human</name>
    <dbReference type="NCBI Taxonomy" id="9606"/>
    <lineage>
        <taxon>Eukaryota</taxon>
        <taxon>Metazoa</taxon>
        <taxon>Chordata</taxon>
        <taxon>Craniata</taxon>
        <taxon>Vertebrata</taxon>
        <taxon>Euteleostomi</taxon>
        <taxon>Mammalia</taxon>
        <taxon>Eutheria</taxon>
        <taxon>Euarchontoglires</taxon>
        <taxon>Primates</taxon>
        <taxon>Haplorrhini</taxon>
        <taxon>Catarrhini</taxon>
        <taxon>Hominidae</taxon>
        <taxon>Homo</taxon>
    </lineage>
</organism>
<comment type="interaction">
    <interactant intactId="EBI-18398510">
        <id>P0DP42</id>
    </interactant>
    <interactant intactId="EBI-2799703">
        <id>O95070</id>
        <label>YIF1A</label>
    </interactant>
    <organismsDiffer>false</organismsDiffer>
    <experiments>3</experiments>
</comment>
<comment type="subcellular location">
    <subcellularLocation>
        <location evidence="1">Membrane</location>
        <topology evidence="1">Multi-pass membrane protein</topology>
    </subcellularLocation>
</comment>
<keyword id="KW-0472">Membrane</keyword>
<keyword id="KW-1267">Proteomics identification</keyword>
<keyword id="KW-1185">Reference proteome</keyword>
<keyword id="KW-0812">Transmembrane</keyword>
<dbReference type="EMBL" id="AC005020">
    <property type="status" value="NOT_ANNOTATED_CDS"/>
    <property type="molecule type" value="Genomic_DNA"/>
</dbReference>
<dbReference type="EMBL" id="BI559535">
    <property type="status" value="NOT_ANNOTATED_CDS"/>
    <property type="molecule type" value="mRNA"/>
</dbReference>
<dbReference type="CCDS" id="CCDS87525.1"/>
<dbReference type="RefSeq" id="NP_001182470.1">
    <property type="nucleotide sequence ID" value="NM_001195541.3"/>
</dbReference>
<dbReference type="RefSeq" id="NP_001182471.1">
    <property type="nucleotide sequence ID" value="NM_001195542.3"/>
</dbReference>
<dbReference type="RefSeq" id="NP_001182472.1">
    <property type="nucleotide sequence ID" value="NM_001195543.3"/>
</dbReference>
<dbReference type="RefSeq" id="XP_005250145.1">
    <property type="nucleotide sequence ID" value="XM_005250088.6"/>
</dbReference>
<dbReference type="RefSeq" id="XP_011514001.1">
    <property type="nucleotide sequence ID" value="XM_011515699.3"/>
</dbReference>
<dbReference type="RefSeq" id="XP_011514002.1">
    <property type="nucleotide sequence ID" value="XM_011515700.2"/>
</dbReference>
<dbReference type="RefSeq" id="XP_024302391.1">
    <property type="nucleotide sequence ID" value="XM_024446623.2"/>
</dbReference>
<dbReference type="RefSeq" id="XP_024302392.1">
    <property type="nucleotide sequence ID" value="XM_024446624.2"/>
</dbReference>
<dbReference type="RefSeq" id="XP_024302393.1">
    <property type="nucleotide sequence ID" value="XM_024446625.2"/>
</dbReference>
<dbReference type="RefSeq" id="XP_047275646.1">
    <property type="nucleotide sequence ID" value="XM_047419690.1"/>
</dbReference>
<dbReference type="RefSeq" id="XP_047275647.1">
    <property type="nucleotide sequence ID" value="XM_047419691.1"/>
</dbReference>
<dbReference type="RefSeq" id="XP_054212934.1">
    <property type="nucleotide sequence ID" value="XM_054356959.1"/>
</dbReference>
<dbReference type="RefSeq" id="XP_054212935.1">
    <property type="nucleotide sequence ID" value="XM_054356960.1"/>
</dbReference>
<dbReference type="RefSeq" id="XP_054212936.1">
    <property type="nucleotide sequence ID" value="XM_054356961.1"/>
</dbReference>
<dbReference type="RefSeq" id="XP_054212937.1">
    <property type="nucleotide sequence ID" value="XM_054356962.1"/>
</dbReference>
<dbReference type="RefSeq" id="XP_054212938.1">
    <property type="nucleotide sequence ID" value="XM_054356963.1"/>
</dbReference>
<dbReference type="SMR" id="P0DP42"/>
<dbReference type="IntAct" id="P0DP42">
    <property type="interactions" value="1"/>
</dbReference>
<dbReference type="STRING" id="9606.ENSP00000492416"/>
<dbReference type="BioMuta" id="TMEM225B"/>
<dbReference type="MassIVE" id="P0DP42"/>
<dbReference type="PeptideAtlas" id="P0DP42"/>
<dbReference type="DNASU" id="100289187"/>
<dbReference type="Ensembl" id="ENST00000431679.6">
    <property type="protein sequence ID" value="ENSP00000492416.1"/>
    <property type="gene ID" value="ENSG00000244219.7"/>
</dbReference>
<dbReference type="Ensembl" id="ENST00000453227.5">
    <property type="protein sequence ID" value="ENSP00000491691.1"/>
    <property type="gene ID" value="ENSG00000244219.7"/>
</dbReference>
<dbReference type="GeneID" id="100289187"/>
<dbReference type="KEGG" id="hsa:100289187"/>
<dbReference type="MANE-Select" id="ENST00000431679.6">
    <property type="protein sequence ID" value="ENSP00000492416.1"/>
    <property type="RefSeq nucleotide sequence ID" value="NM_001195541.3"/>
    <property type="RefSeq protein sequence ID" value="NP_001182470.1"/>
</dbReference>
<dbReference type="AGR" id="HGNC:53075"/>
<dbReference type="CTD" id="100289187"/>
<dbReference type="DisGeNET" id="100289187"/>
<dbReference type="GeneCards" id="TMEM225B"/>
<dbReference type="HGNC" id="HGNC:53075">
    <property type="gene designation" value="TMEM225B"/>
</dbReference>
<dbReference type="HPA" id="ENSG00000244219">
    <property type="expression patterns" value="Tissue enriched (testis)"/>
</dbReference>
<dbReference type="neXtProt" id="NX_P0DP42"/>
<dbReference type="OpenTargets" id="ENSG00000244219"/>
<dbReference type="VEuPathDB" id="HostDB:ENSG00000244219"/>
<dbReference type="GeneTree" id="ENSGT00510000055200"/>
<dbReference type="InParanoid" id="P0DP42"/>
<dbReference type="OMA" id="PQFSVQW"/>
<dbReference type="OrthoDB" id="9450674at2759"/>
<dbReference type="PAN-GO" id="P0DP42">
    <property type="GO annotations" value="0 GO annotations based on evolutionary models"/>
</dbReference>
<dbReference type="PathwayCommons" id="P0DP42"/>
<dbReference type="BioGRID-ORCS" id="100289187">
    <property type="hits" value="7 hits in 211 CRISPR screens"/>
</dbReference>
<dbReference type="Pharos" id="P0DP42">
    <property type="development level" value="Tdark"/>
</dbReference>
<dbReference type="PRO" id="PR:P0DP42"/>
<dbReference type="Proteomes" id="UP000005640">
    <property type="component" value="Chromosome 7"/>
</dbReference>
<dbReference type="RNAct" id="P0DP42">
    <property type="molecule type" value="protein"/>
</dbReference>
<dbReference type="Bgee" id="ENSG00000244219">
    <property type="expression patterns" value="Expressed in left testis and 108 other cell types or tissues"/>
</dbReference>
<dbReference type="GO" id="GO:0016020">
    <property type="term" value="C:membrane"/>
    <property type="evidence" value="ECO:0007669"/>
    <property type="project" value="UniProtKB-SubCell"/>
</dbReference>
<dbReference type="InterPro" id="IPR033542">
    <property type="entry name" value="TMEM225"/>
</dbReference>
<dbReference type="PANTHER" id="PTHR36477">
    <property type="entry name" value="TRANSMEMBRANE PROTEIN 225"/>
    <property type="match status" value="1"/>
</dbReference>
<dbReference type="PANTHER" id="PTHR36477:SF2">
    <property type="entry name" value="TRANSMEMBRANE PROTEIN 225B"/>
    <property type="match status" value="1"/>
</dbReference>
<dbReference type="Pfam" id="PF25452">
    <property type="entry name" value="TM225"/>
    <property type="match status" value="1"/>
</dbReference>
<feature type="chain" id="PRO_0000440046" description="Transmembrane protein 225B">
    <location>
        <begin position="1"/>
        <end position="221"/>
    </location>
</feature>
<feature type="transmembrane region" evidence="1">
    <location>
        <begin position="14"/>
        <end position="34"/>
    </location>
</feature>
<feature type="transmembrane region" evidence="1">
    <location>
        <begin position="77"/>
        <end position="97"/>
    </location>
</feature>
<feature type="transmembrane region" evidence="1">
    <location>
        <begin position="109"/>
        <end position="129"/>
    </location>
</feature>
<feature type="transmembrane region" evidence="1">
    <location>
        <begin position="147"/>
        <end position="167"/>
    </location>
</feature>
<name>T225B_HUMAN</name>
<protein>
    <recommendedName>
        <fullName evidence="2">Transmembrane protein 225B</fullName>
    </recommendedName>
</protein>